<name>COAX_NITMU</name>
<evidence type="ECO:0000255" key="1">
    <source>
        <dbReference type="HAMAP-Rule" id="MF_01274"/>
    </source>
</evidence>
<dbReference type="EC" id="2.7.1.33" evidence="1"/>
<dbReference type="EMBL" id="CP000103">
    <property type="protein sequence ID" value="ABB75375.1"/>
    <property type="molecule type" value="Genomic_DNA"/>
</dbReference>
<dbReference type="RefSeq" id="WP_011381386.1">
    <property type="nucleotide sequence ID" value="NC_007614.1"/>
</dbReference>
<dbReference type="SMR" id="Q2Y796"/>
<dbReference type="STRING" id="323848.Nmul_A2081"/>
<dbReference type="KEGG" id="nmu:Nmul_A2081"/>
<dbReference type="eggNOG" id="COG1521">
    <property type="taxonomic scope" value="Bacteria"/>
</dbReference>
<dbReference type="HOGENOM" id="CLU_066627_0_0_4"/>
<dbReference type="OrthoDB" id="9781305at2"/>
<dbReference type="UniPathway" id="UPA00241">
    <property type="reaction ID" value="UER00352"/>
</dbReference>
<dbReference type="Proteomes" id="UP000002718">
    <property type="component" value="Chromosome"/>
</dbReference>
<dbReference type="GO" id="GO:0005737">
    <property type="term" value="C:cytoplasm"/>
    <property type="evidence" value="ECO:0007669"/>
    <property type="project" value="UniProtKB-SubCell"/>
</dbReference>
<dbReference type="GO" id="GO:0005524">
    <property type="term" value="F:ATP binding"/>
    <property type="evidence" value="ECO:0007669"/>
    <property type="project" value="UniProtKB-UniRule"/>
</dbReference>
<dbReference type="GO" id="GO:0046872">
    <property type="term" value="F:metal ion binding"/>
    <property type="evidence" value="ECO:0007669"/>
    <property type="project" value="UniProtKB-KW"/>
</dbReference>
<dbReference type="GO" id="GO:0004594">
    <property type="term" value="F:pantothenate kinase activity"/>
    <property type="evidence" value="ECO:0007669"/>
    <property type="project" value="UniProtKB-UniRule"/>
</dbReference>
<dbReference type="GO" id="GO:0015937">
    <property type="term" value="P:coenzyme A biosynthetic process"/>
    <property type="evidence" value="ECO:0007669"/>
    <property type="project" value="UniProtKB-UniRule"/>
</dbReference>
<dbReference type="CDD" id="cd24015">
    <property type="entry name" value="ASKHA_NBD_PanK-III"/>
    <property type="match status" value="1"/>
</dbReference>
<dbReference type="Gene3D" id="3.30.420.40">
    <property type="match status" value="2"/>
</dbReference>
<dbReference type="HAMAP" id="MF_01274">
    <property type="entry name" value="Pantothen_kinase_3"/>
    <property type="match status" value="1"/>
</dbReference>
<dbReference type="InterPro" id="IPR043129">
    <property type="entry name" value="ATPase_NBD"/>
</dbReference>
<dbReference type="InterPro" id="IPR004619">
    <property type="entry name" value="Type_III_PanK"/>
</dbReference>
<dbReference type="NCBIfam" id="TIGR00671">
    <property type="entry name" value="baf"/>
    <property type="match status" value="1"/>
</dbReference>
<dbReference type="PANTHER" id="PTHR34265">
    <property type="entry name" value="TYPE III PANTOTHENATE KINASE"/>
    <property type="match status" value="1"/>
</dbReference>
<dbReference type="PANTHER" id="PTHR34265:SF1">
    <property type="entry name" value="TYPE III PANTOTHENATE KINASE"/>
    <property type="match status" value="1"/>
</dbReference>
<dbReference type="Pfam" id="PF03309">
    <property type="entry name" value="Pan_kinase"/>
    <property type="match status" value="1"/>
</dbReference>
<dbReference type="SUPFAM" id="SSF53067">
    <property type="entry name" value="Actin-like ATPase domain"/>
    <property type="match status" value="2"/>
</dbReference>
<sequence length="262" mass="27916">MNPLLLAVDSGNTRVKWGLHDGRNWLMQGVAAQGDRVQLEREWRDLREPSRVVISNVANAGVKGSLSELLAQWKAEPQWITAVPYQCGVRNYYSNPAQLGSDRWAALVAAWVLERQGCLVVDAGTAMTVDALSDTGEFLGGLITPGLDLMQKILVEDLGSLESEGGKFCDYPDSTADALYSGAVHAMAGAIERMAALLAGTLGHMPECILSGGAAQQLQPQLNVNVKVMDNLVLQGLLAIARETSETASGGVVASPEDSIEN</sequence>
<comment type="function">
    <text evidence="1">Catalyzes the phosphorylation of pantothenate (Pan), the first step in CoA biosynthesis.</text>
</comment>
<comment type="catalytic activity">
    <reaction evidence="1">
        <text>(R)-pantothenate + ATP = (R)-4'-phosphopantothenate + ADP + H(+)</text>
        <dbReference type="Rhea" id="RHEA:16373"/>
        <dbReference type="ChEBI" id="CHEBI:10986"/>
        <dbReference type="ChEBI" id="CHEBI:15378"/>
        <dbReference type="ChEBI" id="CHEBI:29032"/>
        <dbReference type="ChEBI" id="CHEBI:30616"/>
        <dbReference type="ChEBI" id="CHEBI:456216"/>
        <dbReference type="EC" id="2.7.1.33"/>
    </reaction>
</comment>
<comment type="cofactor">
    <cofactor evidence="1">
        <name>NH4(+)</name>
        <dbReference type="ChEBI" id="CHEBI:28938"/>
    </cofactor>
    <cofactor evidence="1">
        <name>K(+)</name>
        <dbReference type="ChEBI" id="CHEBI:29103"/>
    </cofactor>
    <text evidence="1">A monovalent cation. Ammonium or potassium.</text>
</comment>
<comment type="pathway">
    <text evidence="1">Cofactor biosynthesis; coenzyme A biosynthesis; CoA from (R)-pantothenate: step 1/5.</text>
</comment>
<comment type="subunit">
    <text evidence="1">Homodimer.</text>
</comment>
<comment type="subcellular location">
    <subcellularLocation>
        <location evidence="1">Cytoplasm</location>
    </subcellularLocation>
</comment>
<comment type="similarity">
    <text evidence="1">Belongs to the type III pantothenate kinase family.</text>
</comment>
<feature type="chain" id="PRO_0000270887" description="Type III pantothenate kinase">
    <location>
        <begin position="1"/>
        <end position="262"/>
    </location>
</feature>
<feature type="active site" description="Proton acceptor" evidence="1">
    <location>
        <position position="102"/>
    </location>
</feature>
<feature type="binding site" evidence="1">
    <location>
        <begin position="9"/>
        <end position="16"/>
    </location>
    <ligand>
        <name>ATP</name>
        <dbReference type="ChEBI" id="CHEBI:30616"/>
    </ligand>
</feature>
<feature type="binding site" evidence="1">
    <location>
        <position position="93"/>
    </location>
    <ligand>
        <name>substrate</name>
    </ligand>
</feature>
<feature type="binding site" evidence="1">
    <location>
        <begin position="100"/>
        <end position="103"/>
    </location>
    <ligand>
        <name>substrate</name>
    </ligand>
</feature>
<feature type="binding site" evidence="1">
    <location>
        <position position="122"/>
    </location>
    <ligand>
        <name>K(+)</name>
        <dbReference type="ChEBI" id="CHEBI:29103"/>
    </ligand>
</feature>
<feature type="binding site" evidence="1">
    <location>
        <position position="125"/>
    </location>
    <ligand>
        <name>ATP</name>
        <dbReference type="ChEBI" id="CHEBI:30616"/>
    </ligand>
</feature>
<feature type="binding site" evidence="1">
    <location>
        <position position="175"/>
    </location>
    <ligand>
        <name>substrate</name>
    </ligand>
</feature>
<proteinExistence type="inferred from homology"/>
<organism>
    <name type="scientific">Nitrosospira multiformis (strain ATCC 25196 / NCIMB 11849 / C 71)</name>
    <dbReference type="NCBI Taxonomy" id="323848"/>
    <lineage>
        <taxon>Bacteria</taxon>
        <taxon>Pseudomonadati</taxon>
        <taxon>Pseudomonadota</taxon>
        <taxon>Betaproteobacteria</taxon>
        <taxon>Nitrosomonadales</taxon>
        <taxon>Nitrosomonadaceae</taxon>
        <taxon>Nitrosospira</taxon>
    </lineage>
</organism>
<reference key="1">
    <citation type="submission" date="2005-08" db="EMBL/GenBank/DDBJ databases">
        <title>Complete sequence of chromosome 1 of Nitrosospira multiformis ATCC 25196.</title>
        <authorList>
            <person name="Copeland A."/>
            <person name="Lucas S."/>
            <person name="Lapidus A."/>
            <person name="Barry K."/>
            <person name="Detter J.C."/>
            <person name="Glavina T."/>
            <person name="Hammon N."/>
            <person name="Israni S."/>
            <person name="Pitluck S."/>
            <person name="Chain P."/>
            <person name="Malfatti S."/>
            <person name="Shin M."/>
            <person name="Vergez L."/>
            <person name="Schmutz J."/>
            <person name="Larimer F."/>
            <person name="Land M."/>
            <person name="Hauser L."/>
            <person name="Kyrpides N."/>
            <person name="Lykidis A."/>
            <person name="Richardson P."/>
        </authorList>
    </citation>
    <scope>NUCLEOTIDE SEQUENCE [LARGE SCALE GENOMIC DNA]</scope>
    <source>
        <strain>ATCC 25196 / NCIMB 11849 / C 71</strain>
    </source>
</reference>
<gene>
    <name evidence="1" type="primary">coaX</name>
    <name type="ordered locus">Nmul_A2081</name>
</gene>
<protein>
    <recommendedName>
        <fullName evidence="1">Type III pantothenate kinase</fullName>
        <ecNumber evidence="1">2.7.1.33</ecNumber>
    </recommendedName>
    <alternativeName>
        <fullName evidence="1">PanK-III</fullName>
    </alternativeName>
    <alternativeName>
        <fullName evidence="1">Pantothenic acid kinase</fullName>
    </alternativeName>
</protein>
<keyword id="KW-0067">ATP-binding</keyword>
<keyword id="KW-0173">Coenzyme A biosynthesis</keyword>
<keyword id="KW-0963">Cytoplasm</keyword>
<keyword id="KW-0418">Kinase</keyword>
<keyword id="KW-0479">Metal-binding</keyword>
<keyword id="KW-0547">Nucleotide-binding</keyword>
<keyword id="KW-0630">Potassium</keyword>
<keyword id="KW-1185">Reference proteome</keyword>
<keyword id="KW-0808">Transferase</keyword>
<accession>Q2Y796</accession>